<accession>Q9H1I8</accession>
<accession>B7Z8E0</accession>
<accession>F5H6J9</accession>
<accession>Q4TT54</accession>
<accession>Q8TAZ0</accession>
<accession>Q9H711</accession>
<accession>Q9H9D6</accession>
<feature type="chain" id="PRO_0000064689" description="Activating signal cointegrator 1 complex subunit 2">
    <location>
        <begin position="1"/>
        <end position="757"/>
    </location>
</feature>
<feature type="domain" description="CUE" evidence="1">
    <location>
        <begin position="467"/>
        <end position="510"/>
    </location>
</feature>
<feature type="region of interest" description="Disordered" evidence="2">
    <location>
        <begin position="617"/>
        <end position="687"/>
    </location>
</feature>
<feature type="region of interest" description="Disordered" evidence="2">
    <location>
        <begin position="699"/>
        <end position="757"/>
    </location>
</feature>
<feature type="compositionally biased region" description="Acidic residues" evidence="2">
    <location>
        <begin position="657"/>
        <end position="670"/>
    </location>
</feature>
<feature type="compositionally biased region" description="Basic and acidic residues" evidence="2">
    <location>
        <begin position="671"/>
        <end position="687"/>
    </location>
</feature>
<feature type="compositionally biased region" description="Basic and acidic residues" evidence="2">
    <location>
        <begin position="719"/>
        <end position="734"/>
    </location>
</feature>
<feature type="modified residue" description="Phosphothreonine" evidence="19">
    <location>
        <position position="233"/>
    </location>
</feature>
<feature type="modified residue" description="Phosphoserine" evidence="20">
    <location>
        <position position="447"/>
    </location>
</feature>
<feature type="modified residue" description="Phosphoserine" evidence="20">
    <location>
        <position position="632"/>
    </location>
</feature>
<feature type="modified residue" description="Phosphoserine" evidence="17 18">
    <location>
        <position position="713"/>
    </location>
</feature>
<feature type="splice variant" id="VSP_011009" description="In isoform 2." evidence="13">
    <location>
        <begin position="1"/>
        <end position="114"/>
    </location>
</feature>
<feature type="splice variant" id="VSP_045878" description="In isoform 3." evidence="13">
    <location>
        <begin position="28"/>
        <end position="80"/>
    </location>
</feature>
<feature type="splice variant" id="VSP_045879" description="In isoform 3." evidence="13">
    <location>
        <begin position="137"/>
        <end position="159"/>
    </location>
</feature>
<feature type="splice variant" id="VSP_011010" description="In isoform 2." evidence="13">
    <original>GE</original>
    <variation>EK</variation>
    <location>
        <begin position="483"/>
        <end position="484"/>
    </location>
</feature>
<feature type="splice variant" id="VSP_011011" description="In isoform 2." evidence="13">
    <location>
        <begin position="485"/>
        <end position="757"/>
    </location>
</feature>
<feature type="sequence variant" id="VAR_050675" description="In dbSNP:rs1894473.">
    <original>R</original>
    <variation>C</variation>
    <location>
        <position position="96"/>
    </location>
</feature>
<feature type="sequence variant" id="VAR_050676" description="In dbSNP:rs11549795.">
    <original>V</original>
    <variation>I</variation>
    <location>
        <position position="123"/>
    </location>
</feature>
<feature type="sequence variant" id="VAR_025512" description="In dbSNP:rs28265.">
    <original>D</original>
    <variation>H</variation>
    <location>
        <position position="407"/>
    </location>
</feature>
<feature type="sequence variant" id="VAR_025513" description="In dbSNP:rs36571.">
    <original>P</original>
    <variation>S</variation>
    <location>
        <position position="423"/>
    </location>
</feature>
<feature type="sequence variant" id="VAR_019464" description="In dbSNP:rs4823054." evidence="3">
    <original>R</original>
    <variation>Q</variation>
    <location>
        <position position="509"/>
    </location>
</feature>
<feature type="sequence variant" id="VAR_050677" description="In dbSNP:rs34833047.">
    <original>D</original>
    <variation>G</variation>
    <location>
        <position position="546"/>
    </location>
</feature>
<feature type="sequence variant" id="VAR_050678" description="In dbSNP:rs34062345.">
    <original>E</original>
    <variation>K</variation>
    <location>
        <position position="588"/>
    </location>
</feature>
<feature type="sequence variant" id="VAR_025514" description="In dbSNP:rs6006259.">
    <original>R</original>
    <variation>L</variation>
    <location>
        <position position="639"/>
    </location>
</feature>
<feature type="mutagenesis site" description="Loss of ubiquitin binding." evidence="6">
    <original>LL</original>
    <variation>AA</variation>
    <location>
        <begin position="478"/>
        <end position="479"/>
    </location>
</feature>
<feature type="mutagenesis site" description="Decreases ubiquitin binding." evidence="9">
    <original>LPDLGEGFILACL</original>
    <variation>AADLGEGFALACA</variation>
    <location>
        <begin position="479"/>
        <end position="491"/>
    </location>
</feature>
<feature type="mutagenesis site" description="Loss of ubiquitin binding." evidence="6">
    <original>L</original>
    <variation>A</variation>
    <location>
        <position position="506"/>
    </location>
</feature>
<feature type="sequence conflict" description="In Ref. 2; BAB15089." evidence="15" ref="2">
    <original>Q</original>
    <variation>H</variation>
    <location>
        <position position="344"/>
    </location>
</feature>
<feature type="sequence conflict" description="In Ref. 2; BAB15089." evidence="15" ref="2">
    <original>K</original>
    <variation>N</variation>
    <location>
        <position position="526"/>
    </location>
</feature>
<feature type="sequence conflict" description="In Ref. 2; BAB15089." evidence="15" ref="2">
    <original>R</original>
    <variation>C</variation>
    <location>
        <position position="586"/>
    </location>
</feature>
<feature type="sequence conflict" description="In Ref. 2; BAH13926." evidence="15" ref="2">
    <original>R</original>
    <variation>G</variation>
    <location>
        <position position="639"/>
    </location>
</feature>
<feature type="sequence conflict" description="In Ref. 1; AAG45475." evidence="15" ref="1">
    <original>P</original>
    <variation>L</variation>
    <location>
        <position position="645"/>
    </location>
</feature>
<feature type="sequence conflict" description="In Ref. 1; AAG45475." evidence="15" ref="1">
    <original>P</original>
    <variation>L</variation>
    <location>
        <position position="653"/>
    </location>
</feature>
<feature type="sequence conflict" description="In Ref. 2; BAH13926." evidence="15" ref="2">
    <original>D</original>
    <variation>G</variation>
    <location>
        <position position="661"/>
    </location>
</feature>
<feature type="sequence conflict" description="In Ref. 2; BAH13926." evidence="15" ref="2">
    <original>T</original>
    <variation>I</variation>
    <location>
        <position position="744"/>
    </location>
</feature>
<feature type="helix" evidence="22">
    <location>
        <begin position="6"/>
        <end position="8"/>
    </location>
</feature>
<feature type="strand" evidence="22">
    <location>
        <begin position="10"/>
        <end position="14"/>
    </location>
</feature>
<feature type="strand" evidence="22">
    <location>
        <begin position="21"/>
        <end position="27"/>
    </location>
</feature>
<feature type="helix" evidence="22">
    <location>
        <begin position="29"/>
        <end position="31"/>
    </location>
</feature>
<feature type="helix" evidence="22">
    <location>
        <begin position="49"/>
        <end position="71"/>
    </location>
</feature>
<feature type="helix" evidence="22">
    <location>
        <begin position="74"/>
        <end position="83"/>
    </location>
</feature>
<feature type="helix" evidence="22">
    <location>
        <begin position="85"/>
        <end position="97"/>
    </location>
</feature>
<feature type="helix" evidence="22">
    <location>
        <begin position="110"/>
        <end position="131"/>
    </location>
</feature>
<feature type="strand" evidence="22">
    <location>
        <begin position="133"/>
        <end position="140"/>
    </location>
</feature>
<feature type="helix" evidence="22">
    <location>
        <begin position="143"/>
        <end position="152"/>
    </location>
</feature>
<feature type="helix" evidence="22">
    <location>
        <begin position="158"/>
        <end position="168"/>
    </location>
</feature>
<feature type="turn" evidence="22">
    <location>
        <begin position="169"/>
        <end position="171"/>
    </location>
</feature>
<feature type="helix" evidence="22">
    <location>
        <begin position="173"/>
        <end position="186"/>
    </location>
</feature>
<feature type="helix" evidence="22">
    <location>
        <begin position="189"/>
        <end position="211"/>
    </location>
</feature>
<feature type="turn" evidence="22">
    <location>
        <begin position="234"/>
        <end position="236"/>
    </location>
</feature>
<feature type="helix" evidence="22">
    <location>
        <begin position="239"/>
        <end position="262"/>
    </location>
</feature>
<feature type="helix" evidence="22">
    <location>
        <begin position="264"/>
        <end position="266"/>
    </location>
</feature>
<feature type="helix" evidence="22">
    <location>
        <begin position="267"/>
        <end position="271"/>
    </location>
</feature>
<feature type="turn" evidence="22">
    <location>
        <begin position="272"/>
        <end position="274"/>
    </location>
</feature>
<feature type="helix" evidence="22">
    <location>
        <begin position="275"/>
        <end position="296"/>
    </location>
</feature>
<feature type="helix" evidence="22">
    <location>
        <begin position="297"/>
        <end position="299"/>
    </location>
</feature>
<feature type="helix" evidence="22">
    <location>
        <begin position="302"/>
        <end position="330"/>
    </location>
</feature>
<feature type="helix" evidence="22">
    <location>
        <begin position="332"/>
        <end position="336"/>
    </location>
</feature>
<feature type="helix" evidence="22">
    <location>
        <begin position="344"/>
        <end position="355"/>
    </location>
</feature>
<feature type="turn" evidence="22">
    <location>
        <begin position="356"/>
        <end position="359"/>
    </location>
</feature>
<feature type="helix" evidence="22">
    <location>
        <begin position="361"/>
        <end position="370"/>
    </location>
</feature>
<feature type="helix" evidence="22">
    <location>
        <begin position="373"/>
        <end position="383"/>
    </location>
</feature>
<feature type="helix" evidence="22">
    <location>
        <begin position="390"/>
        <end position="404"/>
    </location>
</feature>
<feature type="helix" evidence="21">
    <location>
        <begin position="466"/>
        <end position="478"/>
    </location>
</feature>
<feature type="helix" evidence="21">
    <location>
        <begin position="484"/>
        <end position="493"/>
    </location>
</feature>
<feature type="turn" evidence="21">
    <location>
        <begin position="494"/>
        <end position="496"/>
    </location>
</feature>
<feature type="helix" evidence="21">
    <location>
        <begin position="498"/>
        <end position="506"/>
    </location>
</feature>
<feature type="turn" evidence="21">
    <location>
        <begin position="512"/>
        <end position="516"/>
    </location>
</feature>
<comment type="function">
    <text evidence="3 6 9 10 11">Ubiquitin-binding protein involved in DNA repair and rescue of stalled ribosomes (PubMed:29144457, PubMed:32099016, PubMed:32579943, PubMed:36302773). Plays a role in DNA damage repair as component of the ASCC complex (PubMed:29144457). Recruits ASCC3 and ALKBH3 to sites of DNA damage by binding to polyubiquitinated proteins that have 'Lys-63'-linked polyubiquitin chains (PubMed:29144457). Part of the ASC-1 complex that enhances NF-kappa-B, SRF and AP1 transactivation (PubMed:12077347). Involved in activation of the ribosome quality control (RQC) pathway, a pathway that degrades nascent peptide chains during problematic translation (PubMed:32099016, PubMed:32579943, PubMed:36302773). Specifically recognizes and binds RPS20/uS10 ubiquitinated by ZNF598, promoting recruitment of the RQT (ribosome quality control trigger) complex on stalled ribosomes, followed by disassembly of stalled ribosomes (PubMed:36302773).</text>
</comment>
<comment type="subunit">
    <text evidence="3 4 5 6 7 8 9 10 11">Identified in the ASCC complex that contains ASCC1, ASCC2 and ASCC3 (PubMed:29144457, PubMed:29997253). Interacts directly with ASCC3 (PubMed:29997253, PubMed:32099016). The ASCC complex interacts with ALKBH3 (PubMed:22055184, PubMed:29144457). Interacts (via CUE domain) with 'Lys-63'-linked polyubiquitin chains, but not with 'Lys-48'-linked polyubiquitin chains (PubMed:29144457). Part of the ASC-1 complex, that contains TRIP4, ASCC1, ASCC2 and ASCC3 (PubMed:12077347). Component of the RQT (ribosome quality control trigger) complex, that contains ASCC2, ASCC3 and TRIP4 (PubMed:32099016, PubMed:32579943, PubMed:36302773). Interacts with CSRP1 (PubMed:26924529). Interacts with PRPF8, a component of the spliceosome (PubMed:29144457). Interacts with ZCCHC4 (PubMed:31799605).</text>
</comment>
<comment type="interaction">
    <interactant intactId="EBI-711197">
        <id>Q9H1I8</id>
    </interactant>
    <interactant intactId="EBI-1210710">
        <id>Q8N3C0</id>
        <label>ASCC3</label>
    </interactant>
    <organismsDiffer>false</organismsDiffer>
    <experiments>9</experiments>
</comment>
<comment type="interaction">
    <interactant intactId="EBI-711197">
        <id>Q9H1I8</id>
    </interactant>
    <interactant intactId="EBI-743591">
        <id>Q9BW62</id>
        <label>KATNAL1</label>
    </interactant>
    <organismsDiffer>false</organismsDiffer>
    <experiments>3</experiments>
</comment>
<comment type="interaction">
    <interactant intactId="EBI-711197">
        <id>Q9H1I8</id>
    </interactant>
    <interactant intactId="EBI-2798416">
        <id>Q99633</id>
        <label>PRPF18</label>
    </interactant>
    <organismsDiffer>false</organismsDiffer>
    <experiments>3</experiments>
</comment>
<comment type="subcellular location">
    <subcellularLocation>
        <location evidence="3 5 6">Nucleus</location>
    </subcellularLocation>
    <subcellularLocation>
        <location evidence="6 7">Nucleus speckle</location>
    </subcellularLocation>
    <text evidence="6">Colocalizes with the spliceosomal components PRPF8 and SNRNP200/BRR2 in nuclear foci when cells have been exposed to alkylating agents that cause DNA damage. Colocalizes with RNF113A and 'Lys-63'-linked polyubiquitinated proteins, ALKBH3 and ASCC3 in nuclear foci when cells have been exposed to alkylating agents that cause DNA damage.</text>
</comment>
<comment type="alternative products">
    <event type="alternative splicing"/>
    <isoform>
        <id>Q9H1I8-1</id>
        <name>1</name>
        <sequence type="displayed"/>
    </isoform>
    <isoform>
        <id>Q9H1I8-2</id>
        <name>2</name>
        <sequence type="described" ref="VSP_011009 VSP_011010 VSP_011011"/>
    </isoform>
    <isoform>
        <id>Q9H1I8-3</id>
        <name>3</name>
        <sequence type="described" ref="VSP_045878 VSP_045879"/>
    </isoform>
</comment>
<comment type="tissue specificity">
    <text evidence="3">Ubiquitous.</text>
</comment>
<comment type="domain">
    <text evidence="16">The CUE domain specifically binds RPS20/uS10 ubiquitinated via 'Lys-63'-linked ubiquitin chains by ZNF598.</text>
</comment>
<comment type="similarity">
    <text evidence="15">Belongs to the ASCC2 family.</text>
</comment>
<comment type="sequence caution" evidence="15">
    <conflict type="erroneous initiation">
        <sequence resource="EMBL-CDS" id="BAB15089"/>
    </conflict>
</comment>
<dbReference type="EMBL" id="AY013289">
    <property type="protein sequence ID" value="AAG45475.1"/>
    <property type="molecule type" value="mRNA"/>
</dbReference>
<dbReference type="EMBL" id="AK022886">
    <property type="protein sequence ID" value="BAB14293.1"/>
    <property type="molecule type" value="mRNA"/>
</dbReference>
<dbReference type="EMBL" id="AK025241">
    <property type="protein sequence ID" value="BAB15089.1"/>
    <property type="status" value="ALT_INIT"/>
    <property type="molecule type" value="mRNA"/>
</dbReference>
<dbReference type="EMBL" id="AK303257">
    <property type="protein sequence ID" value="BAH13926.1"/>
    <property type="molecule type" value="mRNA"/>
</dbReference>
<dbReference type="EMBL" id="AC004882">
    <property type="status" value="NOT_ANNOTATED_CDS"/>
    <property type="molecule type" value="Genomic_DNA"/>
</dbReference>
<dbReference type="EMBL" id="Z82171">
    <property type="status" value="NOT_ANNOTATED_CDS"/>
    <property type="molecule type" value="Genomic_DNA"/>
</dbReference>
<dbReference type="EMBL" id="BC025368">
    <property type="protein sequence ID" value="AAH25368.1"/>
    <property type="molecule type" value="mRNA"/>
</dbReference>
<dbReference type="CCDS" id="CCDS13869.1">
    <molecule id="Q9H1I8-1"/>
</dbReference>
<dbReference type="CCDS" id="CCDS56226.1">
    <molecule id="Q9H1I8-3"/>
</dbReference>
<dbReference type="RefSeq" id="NP_001229835.1">
    <molecule id="Q9H1I8-3"/>
    <property type="nucleotide sequence ID" value="NM_001242906.2"/>
</dbReference>
<dbReference type="RefSeq" id="NP_001356850.1">
    <molecule id="Q9H1I8-1"/>
    <property type="nucleotide sequence ID" value="NM_001369921.1"/>
</dbReference>
<dbReference type="RefSeq" id="NP_001356851.1">
    <molecule id="Q9H1I8-1"/>
    <property type="nucleotide sequence ID" value="NM_001369922.1"/>
</dbReference>
<dbReference type="RefSeq" id="NP_001356852.1">
    <molecule id="Q9H1I8-1"/>
    <property type="nucleotide sequence ID" value="NM_001369923.1"/>
</dbReference>
<dbReference type="RefSeq" id="NP_115580.2">
    <molecule id="Q9H1I8-1"/>
    <property type="nucleotide sequence ID" value="NM_032204.4"/>
</dbReference>
<dbReference type="RefSeq" id="XP_005261832.1">
    <property type="nucleotide sequence ID" value="XM_005261775.2"/>
</dbReference>
<dbReference type="RefSeq" id="XP_016884487.1">
    <property type="nucleotide sequence ID" value="XM_017028998.1"/>
</dbReference>
<dbReference type="RefSeq" id="XP_016884488.1">
    <property type="nucleotide sequence ID" value="XM_017028999.1"/>
</dbReference>
<dbReference type="RefSeq" id="XP_016884489.1">
    <property type="nucleotide sequence ID" value="XM_017029000.1"/>
</dbReference>
<dbReference type="RefSeq" id="XP_047297496.1">
    <molecule id="Q9H1I8-1"/>
    <property type="nucleotide sequence ID" value="XM_047441540.1"/>
</dbReference>
<dbReference type="RefSeq" id="XP_054181993.1">
    <molecule id="Q9H1I8-1"/>
    <property type="nucleotide sequence ID" value="XM_054326018.1"/>
</dbReference>
<dbReference type="PDB" id="2DI0">
    <property type="method" value="NMR"/>
    <property type="chains" value="A=463-526"/>
</dbReference>
<dbReference type="PDB" id="6YXQ">
    <property type="method" value="X-ray"/>
    <property type="resolution" value="2.70 A"/>
    <property type="chains" value="B=2-434"/>
</dbReference>
<dbReference type="PDBsum" id="2DI0"/>
<dbReference type="PDBsum" id="6YXQ"/>
<dbReference type="SMR" id="Q9H1I8"/>
<dbReference type="BioGRID" id="123921">
    <property type="interactions" value="147"/>
</dbReference>
<dbReference type="ComplexPortal" id="CPX-6641">
    <property type="entry name" value="ASCC DNA alkylation repair complex"/>
</dbReference>
<dbReference type="ComplexPortal" id="CPX-6642">
    <property type="entry name" value="RQT ribosome-associated quality control trigger complex"/>
</dbReference>
<dbReference type="CORUM" id="Q9H1I8"/>
<dbReference type="FunCoup" id="Q9H1I8">
    <property type="interactions" value="2416"/>
</dbReference>
<dbReference type="IntAct" id="Q9H1I8">
    <property type="interactions" value="92"/>
</dbReference>
<dbReference type="MINT" id="Q9H1I8"/>
<dbReference type="STRING" id="9606.ENSP00000380877"/>
<dbReference type="GlyGen" id="Q9H1I8">
    <property type="glycosylation" value="1 site, 1 O-linked glycan (1 site)"/>
</dbReference>
<dbReference type="iPTMnet" id="Q9H1I8"/>
<dbReference type="PhosphoSitePlus" id="Q9H1I8"/>
<dbReference type="BioMuta" id="ASCC2"/>
<dbReference type="DMDM" id="92090990"/>
<dbReference type="jPOST" id="Q9H1I8"/>
<dbReference type="MassIVE" id="Q9H1I8"/>
<dbReference type="PaxDb" id="9606-ENSP00000380877"/>
<dbReference type="PeptideAtlas" id="Q9H1I8"/>
<dbReference type="ProteomicsDB" id="27212"/>
<dbReference type="ProteomicsDB" id="80413">
    <molecule id="Q9H1I8-1"/>
</dbReference>
<dbReference type="ProteomicsDB" id="80414">
    <molecule id="Q9H1I8-2"/>
</dbReference>
<dbReference type="Pumba" id="Q9H1I8"/>
<dbReference type="Antibodypedia" id="224">
    <property type="antibodies" value="182 antibodies from 26 providers"/>
</dbReference>
<dbReference type="DNASU" id="84164"/>
<dbReference type="Ensembl" id="ENST00000307790.8">
    <molecule id="Q9H1I8-1"/>
    <property type="protein sequence ID" value="ENSP00000305502.3"/>
    <property type="gene ID" value="ENSG00000100325.15"/>
</dbReference>
<dbReference type="Ensembl" id="ENST00000397771.6">
    <molecule id="Q9H1I8-1"/>
    <property type="protein sequence ID" value="ENSP00000380877.2"/>
    <property type="gene ID" value="ENSG00000100325.15"/>
</dbReference>
<dbReference type="Ensembl" id="ENST00000542393.5">
    <molecule id="Q9H1I8-3"/>
    <property type="protein sequence ID" value="ENSP00000437570.1"/>
    <property type="gene ID" value="ENSG00000100325.15"/>
</dbReference>
<dbReference type="GeneID" id="84164"/>
<dbReference type="KEGG" id="hsa:84164"/>
<dbReference type="MANE-Select" id="ENST00000307790.8">
    <property type="protein sequence ID" value="ENSP00000305502.3"/>
    <property type="RefSeq nucleotide sequence ID" value="NM_032204.5"/>
    <property type="RefSeq protein sequence ID" value="NP_115580.2"/>
</dbReference>
<dbReference type="UCSC" id="uc003agr.4">
    <molecule id="Q9H1I8-1"/>
    <property type="organism name" value="human"/>
</dbReference>
<dbReference type="AGR" id="HGNC:24103"/>
<dbReference type="CTD" id="84164"/>
<dbReference type="DisGeNET" id="84164"/>
<dbReference type="GeneCards" id="ASCC2"/>
<dbReference type="HGNC" id="HGNC:24103">
    <property type="gene designation" value="ASCC2"/>
</dbReference>
<dbReference type="HPA" id="ENSG00000100325">
    <property type="expression patterns" value="Low tissue specificity"/>
</dbReference>
<dbReference type="MIM" id="614216">
    <property type="type" value="gene"/>
</dbReference>
<dbReference type="neXtProt" id="NX_Q9H1I8"/>
<dbReference type="OpenTargets" id="ENSG00000100325"/>
<dbReference type="PharmGKB" id="PA134916940"/>
<dbReference type="VEuPathDB" id="HostDB:ENSG00000100325"/>
<dbReference type="eggNOG" id="KOG4501">
    <property type="taxonomic scope" value="Eukaryota"/>
</dbReference>
<dbReference type="GeneTree" id="ENSGT00390000018806"/>
<dbReference type="HOGENOM" id="CLU_012749_0_0_1"/>
<dbReference type="InParanoid" id="Q9H1I8"/>
<dbReference type="OMA" id="LSQHEFW"/>
<dbReference type="OrthoDB" id="5577209at2759"/>
<dbReference type="PAN-GO" id="Q9H1I8">
    <property type="GO annotations" value="2 GO annotations based on evolutionary models"/>
</dbReference>
<dbReference type="PhylomeDB" id="Q9H1I8"/>
<dbReference type="TreeFam" id="TF323459"/>
<dbReference type="PathwayCommons" id="Q9H1I8"/>
<dbReference type="Reactome" id="R-HSA-112126">
    <property type="pathway name" value="ALKBH3 mediated reversal of alkylation damage"/>
</dbReference>
<dbReference type="SignaLink" id="Q9H1I8"/>
<dbReference type="SIGNOR" id="Q9H1I8"/>
<dbReference type="BioGRID-ORCS" id="84164">
    <property type="hits" value="17 hits in 1154 CRISPR screens"/>
</dbReference>
<dbReference type="CD-CODE" id="804901D1">
    <property type="entry name" value="Nuclear speckle"/>
</dbReference>
<dbReference type="ChiTaRS" id="ASCC2">
    <property type="organism name" value="human"/>
</dbReference>
<dbReference type="EvolutionaryTrace" id="Q9H1I8"/>
<dbReference type="GeneWiki" id="ASCC2"/>
<dbReference type="GenomeRNAi" id="84164"/>
<dbReference type="Pharos" id="Q9H1I8">
    <property type="development level" value="Tbio"/>
</dbReference>
<dbReference type="PRO" id="PR:Q9H1I8"/>
<dbReference type="Proteomes" id="UP000005640">
    <property type="component" value="Chromosome 22"/>
</dbReference>
<dbReference type="RNAct" id="Q9H1I8">
    <property type="molecule type" value="protein"/>
</dbReference>
<dbReference type="Bgee" id="ENSG00000100325">
    <property type="expression patterns" value="Expressed in lower esophagus mucosa and 190 other cell types or tissues"/>
</dbReference>
<dbReference type="ExpressionAtlas" id="Q9H1I8">
    <property type="expression patterns" value="baseline and differential"/>
</dbReference>
<dbReference type="GO" id="GO:0022626">
    <property type="term" value="C:cytosolic ribosome"/>
    <property type="evidence" value="ECO:0000314"/>
    <property type="project" value="UniProt"/>
</dbReference>
<dbReference type="GO" id="GO:1990391">
    <property type="term" value="C:DNA repair complex"/>
    <property type="evidence" value="ECO:0000353"/>
    <property type="project" value="ComplexPortal"/>
</dbReference>
<dbReference type="GO" id="GO:0016607">
    <property type="term" value="C:nuclear speck"/>
    <property type="evidence" value="ECO:0007669"/>
    <property type="project" value="UniProtKB-SubCell"/>
</dbReference>
<dbReference type="GO" id="GO:0005654">
    <property type="term" value="C:nucleoplasm"/>
    <property type="evidence" value="ECO:0000304"/>
    <property type="project" value="Reactome"/>
</dbReference>
<dbReference type="GO" id="GO:0005634">
    <property type="term" value="C:nucleus"/>
    <property type="evidence" value="ECO:0000314"/>
    <property type="project" value="UniProtKB"/>
</dbReference>
<dbReference type="GO" id="GO:0180022">
    <property type="term" value="C:RQC-trigger complex"/>
    <property type="evidence" value="ECO:0000314"/>
    <property type="project" value="UniProtKB"/>
</dbReference>
<dbReference type="GO" id="GO:0070530">
    <property type="term" value="F:K63-linked polyubiquitin modification-dependent protein binding"/>
    <property type="evidence" value="ECO:0000314"/>
    <property type="project" value="UniProtKB"/>
</dbReference>
<dbReference type="GO" id="GO:0043130">
    <property type="term" value="F:ubiquitin binding"/>
    <property type="evidence" value="ECO:0000318"/>
    <property type="project" value="GO_Central"/>
</dbReference>
<dbReference type="GO" id="GO:0006307">
    <property type="term" value="P:DNA alkylation repair"/>
    <property type="evidence" value="ECO:0000303"/>
    <property type="project" value="ComplexPortal"/>
</dbReference>
<dbReference type="GO" id="GO:0006355">
    <property type="term" value="P:regulation of DNA-templated transcription"/>
    <property type="evidence" value="ECO:0000314"/>
    <property type="project" value="UniProtKB"/>
</dbReference>
<dbReference type="GO" id="GO:0072344">
    <property type="term" value="P:rescue of stalled ribosome"/>
    <property type="evidence" value="ECO:0000314"/>
    <property type="project" value="UniProtKB"/>
</dbReference>
<dbReference type="GO" id="GO:0032790">
    <property type="term" value="P:ribosome disassembly"/>
    <property type="evidence" value="ECO:0000314"/>
    <property type="project" value="UniProtKB"/>
</dbReference>
<dbReference type="GO" id="GO:1990116">
    <property type="term" value="P:ribosome-associated ubiquitin-dependent protein catabolic process"/>
    <property type="evidence" value="ECO:0000315"/>
    <property type="project" value="UniProtKB"/>
</dbReference>
<dbReference type="CDD" id="cd14364">
    <property type="entry name" value="CUE_ASCC2"/>
    <property type="match status" value="1"/>
</dbReference>
<dbReference type="Gene3D" id="1.10.8.10">
    <property type="entry name" value="DNA helicase RuvA subunit, C-terminal domain"/>
    <property type="match status" value="1"/>
</dbReference>
<dbReference type="InterPro" id="IPR052586">
    <property type="entry name" value="ASCC2"/>
</dbReference>
<dbReference type="InterPro" id="IPR041800">
    <property type="entry name" value="ASCC2_CUE"/>
</dbReference>
<dbReference type="InterPro" id="IPR003892">
    <property type="entry name" value="CUE"/>
</dbReference>
<dbReference type="InterPro" id="IPR009060">
    <property type="entry name" value="UBA-like_sf"/>
</dbReference>
<dbReference type="PANTHER" id="PTHR21494:SF0">
    <property type="entry name" value="ACTIVATING SIGNAL COINTEGRATOR 1 COMPLEX SUBUNIT 2"/>
    <property type="match status" value="1"/>
</dbReference>
<dbReference type="PANTHER" id="PTHR21494">
    <property type="entry name" value="ACTIVATING SIGNAL COINTEGRATOR 1 COMPLEX SUBUNIT 2 ASC-1 COMPLEX SUBUNIT P100"/>
    <property type="match status" value="1"/>
</dbReference>
<dbReference type="Pfam" id="PF02845">
    <property type="entry name" value="CUE"/>
    <property type="match status" value="1"/>
</dbReference>
<dbReference type="SMART" id="SM00546">
    <property type="entry name" value="CUE"/>
    <property type="match status" value="1"/>
</dbReference>
<dbReference type="SUPFAM" id="SSF46934">
    <property type="entry name" value="UBA-like"/>
    <property type="match status" value="1"/>
</dbReference>
<dbReference type="PROSITE" id="PS51140">
    <property type="entry name" value="CUE"/>
    <property type="match status" value="1"/>
</dbReference>
<proteinExistence type="evidence at protein level"/>
<reference key="1">
    <citation type="journal article" date="2002" name="Mol. Cell. Biol.">
        <title>Novel transcription coactivator complex containing activating signal cointegrator 1.</title>
        <authorList>
            <person name="Jung D.-J."/>
            <person name="Sung H.-S."/>
            <person name="Goo Y.-W."/>
            <person name="Lee H.M."/>
            <person name="Park O.K."/>
            <person name="Jung S.-Y."/>
            <person name="Lim J."/>
            <person name="Kim H.-J."/>
            <person name="Lee S.-K."/>
            <person name="Kim T.S."/>
            <person name="Lee J.W."/>
            <person name="Lee Y.C."/>
        </authorList>
    </citation>
    <scope>NUCLEOTIDE SEQUENCE [MRNA] (ISOFORM 1)</scope>
    <scope>PARTIAL PROTEIN SEQUENCE</scope>
    <scope>FUNCTION</scope>
    <scope>VARIANT GLN-509</scope>
    <scope>IDENTIFICATION OF THE ASC-1 COMPLEX</scope>
    <scope>SUBCELLULAR LOCATION</scope>
    <scope>TISSUE SPECIFICITY</scope>
    <source>
        <tissue>Cervix carcinoma</tissue>
    </source>
</reference>
<reference key="2">
    <citation type="journal article" date="2004" name="Nat. Genet.">
        <title>Complete sequencing and characterization of 21,243 full-length human cDNAs.</title>
        <authorList>
            <person name="Ota T."/>
            <person name="Suzuki Y."/>
            <person name="Nishikawa T."/>
            <person name="Otsuki T."/>
            <person name="Sugiyama T."/>
            <person name="Irie R."/>
            <person name="Wakamatsu A."/>
            <person name="Hayashi K."/>
            <person name="Sato H."/>
            <person name="Nagai K."/>
            <person name="Kimura K."/>
            <person name="Makita H."/>
            <person name="Sekine M."/>
            <person name="Obayashi M."/>
            <person name="Nishi T."/>
            <person name="Shibahara T."/>
            <person name="Tanaka T."/>
            <person name="Ishii S."/>
            <person name="Yamamoto J."/>
            <person name="Saito K."/>
            <person name="Kawai Y."/>
            <person name="Isono Y."/>
            <person name="Nakamura Y."/>
            <person name="Nagahari K."/>
            <person name="Murakami K."/>
            <person name="Yasuda T."/>
            <person name="Iwayanagi T."/>
            <person name="Wagatsuma M."/>
            <person name="Shiratori A."/>
            <person name="Sudo H."/>
            <person name="Hosoiri T."/>
            <person name="Kaku Y."/>
            <person name="Kodaira H."/>
            <person name="Kondo H."/>
            <person name="Sugawara M."/>
            <person name="Takahashi M."/>
            <person name="Kanda K."/>
            <person name="Yokoi T."/>
            <person name="Furuya T."/>
            <person name="Kikkawa E."/>
            <person name="Omura Y."/>
            <person name="Abe K."/>
            <person name="Kamihara K."/>
            <person name="Katsuta N."/>
            <person name="Sato K."/>
            <person name="Tanikawa M."/>
            <person name="Yamazaki M."/>
            <person name="Ninomiya K."/>
            <person name="Ishibashi T."/>
            <person name="Yamashita H."/>
            <person name="Murakawa K."/>
            <person name="Fujimori K."/>
            <person name="Tanai H."/>
            <person name="Kimata M."/>
            <person name="Watanabe M."/>
            <person name="Hiraoka S."/>
            <person name="Chiba Y."/>
            <person name="Ishida S."/>
            <person name="Ono Y."/>
            <person name="Takiguchi S."/>
            <person name="Watanabe S."/>
            <person name="Yosida M."/>
            <person name="Hotuta T."/>
            <person name="Kusano J."/>
            <person name="Kanehori K."/>
            <person name="Takahashi-Fujii A."/>
            <person name="Hara H."/>
            <person name="Tanase T.-O."/>
            <person name="Nomura Y."/>
            <person name="Togiya S."/>
            <person name="Komai F."/>
            <person name="Hara R."/>
            <person name="Takeuchi K."/>
            <person name="Arita M."/>
            <person name="Imose N."/>
            <person name="Musashino K."/>
            <person name="Yuuki H."/>
            <person name="Oshima A."/>
            <person name="Sasaki N."/>
            <person name="Aotsuka S."/>
            <person name="Yoshikawa Y."/>
            <person name="Matsunawa H."/>
            <person name="Ichihara T."/>
            <person name="Shiohata N."/>
            <person name="Sano S."/>
            <person name="Moriya S."/>
            <person name="Momiyama H."/>
            <person name="Satoh N."/>
            <person name="Takami S."/>
            <person name="Terashima Y."/>
            <person name="Suzuki O."/>
            <person name="Nakagawa S."/>
            <person name="Senoh A."/>
            <person name="Mizoguchi H."/>
            <person name="Goto Y."/>
            <person name="Shimizu F."/>
            <person name="Wakebe H."/>
            <person name="Hishigaki H."/>
            <person name="Watanabe T."/>
            <person name="Sugiyama A."/>
            <person name="Takemoto M."/>
            <person name="Kawakami B."/>
            <person name="Yamazaki M."/>
            <person name="Watanabe K."/>
            <person name="Kumagai A."/>
            <person name="Itakura S."/>
            <person name="Fukuzumi Y."/>
            <person name="Fujimori Y."/>
            <person name="Komiyama M."/>
            <person name="Tashiro H."/>
            <person name="Tanigami A."/>
            <person name="Fujiwara T."/>
            <person name="Ono T."/>
            <person name="Yamada K."/>
            <person name="Fujii Y."/>
            <person name="Ozaki K."/>
            <person name="Hirao M."/>
            <person name="Ohmori Y."/>
            <person name="Kawabata A."/>
            <person name="Hikiji T."/>
            <person name="Kobatake N."/>
            <person name="Inagaki H."/>
            <person name="Ikema Y."/>
            <person name="Okamoto S."/>
            <person name="Okitani R."/>
            <person name="Kawakami T."/>
            <person name="Noguchi S."/>
            <person name="Itoh T."/>
            <person name="Shigeta K."/>
            <person name="Senba T."/>
            <person name="Matsumura K."/>
            <person name="Nakajima Y."/>
            <person name="Mizuno T."/>
            <person name="Morinaga M."/>
            <person name="Sasaki M."/>
            <person name="Togashi T."/>
            <person name="Oyama M."/>
            <person name="Hata H."/>
            <person name="Watanabe M."/>
            <person name="Komatsu T."/>
            <person name="Mizushima-Sugano J."/>
            <person name="Satoh T."/>
            <person name="Shirai Y."/>
            <person name="Takahashi Y."/>
            <person name="Nakagawa K."/>
            <person name="Okumura K."/>
            <person name="Nagase T."/>
            <person name="Nomura N."/>
            <person name="Kikuchi H."/>
            <person name="Masuho Y."/>
            <person name="Yamashita R."/>
            <person name="Nakai K."/>
            <person name="Yada T."/>
            <person name="Nakamura Y."/>
            <person name="Ohara O."/>
            <person name="Isogai T."/>
            <person name="Sugano S."/>
        </authorList>
    </citation>
    <scope>NUCLEOTIDE SEQUENCE [LARGE SCALE MRNA] (ISOFORMS 1; 2 AND 3)</scope>
    <source>
        <tissue>Colon</tissue>
        <tissue>Teratocarcinoma</tissue>
        <tissue>Thymus</tissue>
    </source>
</reference>
<reference key="3">
    <citation type="journal article" date="1999" name="Nature">
        <title>The DNA sequence of human chromosome 22.</title>
        <authorList>
            <person name="Dunham I."/>
            <person name="Hunt A.R."/>
            <person name="Collins J.E."/>
            <person name="Bruskiewich R."/>
            <person name="Beare D.M."/>
            <person name="Clamp M."/>
            <person name="Smink L.J."/>
            <person name="Ainscough R."/>
            <person name="Almeida J.P."/>
            <person name="Babbage A.K."/>
            <person name="Bagguley C."/>
            <person name="Bailey J."/>
            <person name="Barlow K.F."/>
            <person name="Bates K.N."/>
            <person name="Beasley O.P."/>
            <person name="Bird C.P."/>
            <person name="Blakey S.E."/>
            <person name="Bridgeman A.M."/>
            <person name="Buck D."/>
            <person name="Burgess J."/>
            <person name="Burrill W.D."/>
            <person name="Burton J."/>
            <person name="Carder C."/>
            <person name="Carter N.P."/>
            <person name="Chen Y."/>
            <person name="Clark G."/>
            <person name="Clegg S.M."/>
            <person name="Cobley V.E."/>
            <person name="Cole C.G."/>
            <person name="Collier R.E."/>
            <person name="Connor R."/>
            <person name="Conroy D."/>
            <person name="Corby N.R."/>
            <person name="Coville G.J."/>
            <person name="Cox A.V."/>
            <person name="Davis J."/>
            <person name="Dawson E."/>
            <person name="Dhami P.D."/>
            <person name="Dockree C."/>
            <person name="Dodsworth S.J."/>
            <person name="Durbin R.M."/>
            <person name="Ellington A.G."/>
            <person name="Evans K.L."/>
            <person name="Fey J.M."/>
            <person name="Fleming K."/>
            <person name="French L."/>
            <person name="Garner A.A."/>
            <person name="Gilbert J.G.R."/>
            <person name="Goward M.E."/>
            <person name="Grafham D.V."/>
            <person name="Griffiths M.N.D."/>
            <person name="Hall C."/>
            <person name="Hall R.E."/>
            <person name="Hall-Tamlyn G."/>
            <person name="Heathcott R.W."/>
            <person name="Ho S."/>
            <person name="Holmes S."/>
            <person name="Hunt S.E."/>
            <person name="Jones M.C."/>
            <person name="Kershaw J."/>
            <person name="Kimberley A.M."/>
            <person name="King A."/>
            <person name="Laird G.K."/>
            <person name="Langford C.F."/>
            <person name="Leversha M.A."/>
            <person name="Lloyd C."/>
            <person name="Lloyd D.M."/>
            <person name="Martyn I.D."/>
            <person name="Mashreghi-Mohammadi M."/>
            <person name="Matthews L.H."/>
            <person name="Mccann O.T."/>
            <person name="Mcclay J."/>
            <person name="Mclaren S."/>
            <person name="McMurray A.A."/>
            <person name="Milne S.A."/>
            <person name="Mortimore B.J."/>
            <person name="Odell C.N."/>
            <person name="Pavitt R."/>
            <person name="Pearce A.V."/>
            <person name="Pearson D."/>
            <person name="Phillimore B.J.C.T."/>
            <person name="Phillips S.H."/>
            <person name="Plumb R.W."/>
            <person name="Ramsay H."/>
            <person name="Ramsey Y."/>
            <person name="Rogers L."/>
            <person name="Ross M.T."/>
            <person name="Scott C.E."/>
            <person name="Sehra H.K."/>
            <person name="Skuce C.D."/>
            <person name="Smalley S."/>
            <person name="Smith M.L."/>
            <person name="Soderlund C."/>
            <person name="Spragon L."/>
            <person name="Steward C.A."/>
            <person name="Sulston J.E."/>
            <person name="Swann R.M."/>
            <person name="Vaudin M."/>
            <person name="Wall M."/>
            <person name="Wallis J.M."/>
            <person name="Whiteley M.N."/>
            <person name="Willey D.L."/>
            <person name="Williams L."/>
            <person name="Williams S.A."/>
            <person name="Williamson H."/>
            <person name="Wilmer T.E."/>
            <person name="Wilming L."/>
            <person name="Wright C.L."/>
            <person name="Hubbard T."/>
            <person name="Bentley D.R."/>
            <person name="Beck S."/>
            <person name="Rogers J."/>
            <person name="Shimizu N."/>
            <person name="Minoshima S."/>
            <person name="Kawasaki K."/>
            <person name="Sasaki T."/>
            <person name="Asakawa S."/>
            <person name="Kudoh J."/>
            <person name="Shintani A."/>
            <person name="Shibuya K."/>
            <person name="Yoshizaki Y."/>
            <person name="Aoki N."/>
            <person name="Mitsuyama S."/>
            <person name="Roe B.A."/>
            <person name="Chen F."/>
            <person name="Chu L."/>
            <person name="Crabtree J."/>
            <person name="Deschamps S."/>
            <person name="Do A."/>
            <person name="Do T."/>
            <person name="Dorman A."/>
            <person name="Fang F."/>
            <person name="Fu Y."/>
            <person name="Hu P."/>
            <person name="Hua A."/>
            <person name="Kenton S."/>
            <person name="Lai H."/>
            <person name="Lao H.I."/>
            <person name="Lewis J."/>
            <person name="Lewis S."/>
            <person name="Lin S.-P."/>
            <person name="Loh P."/>
            <person name="Malaj E."/>
            <person name="Nguyen T."/>
            <person name="Pan H."/>
            <person name="Phan S."/>
            <person name="Qi S."/>
            <person name="Qian Y."/>
            <person name="Ray L."/>
            <person name="Ren Q."/>
            <person name="Shaull S."/>
            <person name="Sloan D."/>
            <person name="Song L."/>
            <person name="Wang Q."/>
            <person name="Wang Y."/>
            <person name="Wang Z."/>
            <person name="White J."/>
            <person name="Willingham D."/>
            <person name="Wu H."/>
            <person name="Yao Z."/>
            <person name="Zhan M."/>
            <person name="Zhang G."/>
            <person name="Chissoe S."/>
            <person name="Murray J."/>
            <person name="Miller N."/>
            <person name="Minx P."/>
            <person name="Fulton R."/>
            <person name="Johnson D."/>
            <person name="Bemis G."/>
            <person name="Bentley D."/>
            <person name="Bradshaw H."/>
            <person name="Bourne S."/>
            <person name="Cordes M."/>
            <person name="Du Z."/>
            <person name="Fulton L."/>
            <person name="Goela D."/>
            <person name="Graves T."/>
            <person name="Hawkins J."/>
            <person name="Hinds K."/>
            <person name="Kemp K."/>
            <person name="Latreille P."/>
            <person name="Layman D."/>
            <person name="Ozersky P."/>
            <person name="Rohlfing T."/>
            <person name="Scheet P."/>
            <person name="Walker C."/>
            <person name="Wamsley A."/>
            <person name="Wohldmann P."/>
            <person name="Pepin K."/>
            <person name="Nelson J."/>
            <person name="Korf I."/>
            <person name="Bedell J.A."/>
            <person name="Hillier L.W."/>
            <person name="Mardis E."/>
            <person name="Waterston R."/>
            <person name="Wilson R."/>
            <person name="Emanuel B.S."/>
            <person name="Shaikh T."/>
            <person name="Kurahashi H."/>
            <person name="Saitta S."/>
            <person name="Budarf M.L."/>
            <person name="McDermid H.E."/>
            <person name="Johnson A."/>
            <person name="Wong A.C.C."/>
            <person name="Morrow B.E."/>
            <person name="Edelmann L."/>
            <person name="Kim U.J."/>
            <person name="Shizuya H."/>
            <person name="Simon M.I."/>
            <person name="Dumanski J.P."/>
            <person name="Peyrard M."/>
            <person name="Kedra D."/>
            <person name="Seroussi E."/>
            <person name="Fransson I."/>
            <person name="Tapia I."/>
            <person name="Bruder C.E."/>
            <person name="O'Brien K.P."/>
            <person name="Wilkinson P."/>
            <person name="Bodenteich A."/>
            <person name="Hartman K."/>
            <person name="Hu X."/>
            <person name="Khan A.S."/>
            <person name="Lane L."/>
            <person name="Tilahun Y."/>
            <person name="Wright H."/>
        </authorList>
    </citation>
    <scope>NUCLEOTIDE SEQUENCE [LARGE SCALE GENOMIC DNA]</scope>
</reference>
<reference key="4">
    <citation type="journal article" date="2004" name="Genome Res.">
        <title>The status, quality, and expansion of the NIH full-length cDNA project: the Mammalian Gene Collection (MGC).</title>
        <authorList>
            <consortium name="The MGC Project Team"/>
        </authorList>
    </citation>
    <scope>NUCLEOTIDE SEQUENCE [LARGE SCALE MRNA] (ISOFORM 1)</scope>
    <source>
        <tissue>Skin</tissue>
    </source>
</reference>
<reference key="5">
    <citation type="journal article" date="2007" name="J. Proteome Res.">
        <title>Improved titanium dioxide enrichment of phosphopeptides from HeLa cells and high confident phosphopeptide identification by cross-validation of MS/MS and MS/MS/MS spectra.</title>
        <authorList>
            <person name="Yu L.R."/>
            <person name="Zhu Z."/>
            <person name="Chan K.C."/>
            <person name="Issaq H.J."/>
            <person name="Dimitrov D.S."/>
            <person name="Veenstra T.D."/>
        </authorList>
    </citation>
    <scope>PHOSPHORYLATION [LARGE SCALE ANALYSIS] AT SER-713</scope>
    <scope>IDENTIFICATION BY MASS SPECTROMETRY [LARGE SCALE ANALYSIS]</scope>
    <source>
        <tissue>Cervix carcinoma</tissue>
    </source>
</reference>
<reference key="6">
    <citation type="journal article" date="2010" name="Sci. Signal.">
        <title>Quantitative phosphoproteomics reveals widespread full phosphorylation site occupancy during mitosis.</title>
        <authorList>
            <person name="Olsen J.V."/>
            <person name="Vermeulen M."/>
            <person name="Santamaria A."/>
            <person name="Kumar C."/>
            <person name="Miller M.L."/>
            <person name="Jensen L.J."/>
            <person name="Gnad F."/>
            <person name="Cox J."/>
            <person name="Jensen T.S."/>
            <person name="Nigg E.A."/>
            <person name="Brunak S."/>
            <person name="Mann M."/>
        </authorList>
    </citation>
    <scope>PHOSPHORYLATION [LARGE SCALE ANALYSIS] AT SER-713</scope>
    <scope>IDENTIFICATION BY MASS SPECTROMETRY [LARGE SCALE ANALYSIS]</scope>
    <source>
        <tissue>Cervix carcinoma</tissue>
    </source>
</reference>
<reference key="7">
    <citation type="journal article" date="2011" name="BMC Syst. Biol.">
        <title>Initial characterization of the human central proteome.</title>
        <authorList>
            <person name="Burkard T.R."/>
            <person name="Planyavsky M."/>
            <person name="Kaupe I."/>
            <person name="Breitwieser F.P."/>
            <person name="Buerckstuemmer T."/>
            <person name="Bennett K.L."/>
            <person name="Superti-Furga G."/>
            <person name="Colinge J."/>
        </authorList>
    </citation>
    <scope>IDENTIFICATION BY MASS SPECTROMETRY [LARGE SCALE ANALYSIS]</scope>
</reference>
<reference key="8">
    <citation type="journal article" date="2011" name="Mol. Cell">
        <title>DNA unwinding by ASCC3 helicase is coupled to ALKBH3-dependent DNA alkylation repair and cancer cell proliferation.</title>
        <authorList>
            <person name="Dango S."/>
            <person name="Mosammaparast N."/>
            <person name="Sowa M.E."/>
            <person name="Xiong L.J."/>
            <person name="Wu F."/>
            <person name="Park K."/>
            <person name="Rubin M."/>
            <person name="Gygi S."/>
            <person name="Harper J.W."/>
            <person name="Shi Y."/>
        </authorList>
    </citation>
    <scope>INTERACTION WITH ALKBH3</scope>
</reference>
<reference key="9">
    <citation type="journal article" date="2013" name="J. Proteome Res.">
        <title>Toward a comprehensive characterization of a human cancer cell phosphoproteome.</title>
        <authorList>
            <person name="Zhou H."/>
            <person name="Di Palma S."/>
            <person name="Preisinger C."/>
            <person name="Peng M."/>
            <person name="Polat A.N."/>
            <person name="Heck A.J."/>
            <person name="Mohammed S."/>
        </authorList>
    </citation>
    <scope>PHOSPHORYLATION [LARGE SCALE ANALYSIS] AT THR-233</scope>
    <scope>IDENTIFICATION BY MASS SPECTROMETRY [LARGE SCALE ANALYSIS]</scope>
    <source>
        <tissue>Cervix carcinoma</tissue>
        <tissue>Erythroleukemia</tissue>
    </source>
</reference>
<reference key="10">
    <citation type="journal article" date="2014" name="J. Proteomics">
        <title>An enzyme assisted RP-RPLC approach for in-depth analysis of human liver phosphoproteome.</title>
        <authorList>
            <person name="Bian Y."/>
            <person name="Song C."/>
            <person name="Cheng K."/>
            <person name="Dong M."/>
            <person name="Wang F."/>
            <person name="Huang J."/>
            <person name="Sun D."/>
            <person name="Wang L."/>
            <person name="Ye M."/>
            <person name="Zou H."/>
        </authorList>
    </citation>
    <scope>PHOSPHORYLATION [LARGE SCALE ANALYSIS] AT SER-447 AND SER-632</scope>
    <scope>IDENTIFICATION BY MASS SPECTROMETRY [LARGE SCALE ANALYSIS]</scope>
    <source>
        <tissue>Liver</tissue>
    </source>
</reference>
<reference key="11">
    <citation type="journal article" date="2016" name="Am. J. Hum. Genet.">
        <title>Mutations in subunits of the activating signal cointegrator 1 complex are associated with prenatal spinal muscular atrophy and congenital bone fractures.</title>
        <authorList>
            <person name="Knierim E."/>
            <person name="Hirata H."/>
            <person name="Wolf N.I."/>
            <person name="Morales-Gonzalez S."/>
            <person name="Schottmann G."/>
            <person name="Tanaka Y."/>
            <person name="Rudnik-Schoeneborn S."/>
            <person name="Orgeur M."/>
            <person name="Zerres K."/>
            <person name="Vogt S."/>
            <person name="van Riesen A."/>
            <person name="Gill E."/>
            <person name="Seifert F."/>
            <person name="Zwirner A."/>
            <person name="Kirschner J."/>
            <person name="Goebel H.H."/>
            <person name="Huebner C."/>
            <person name="Stricker S."/>
            <person name="Meierhofer D."/>
            <person name="Stenzel W."/>
            <person name="Schuelke M."/>
        </authorList>
    </citation>
    <scope>INTERACTION WITH CSRP1</scope>
    <scope>SUBCELLULAR LOCATION</scope>
</reference>
<reference key="12">
    <citation type="journal article" date="2017" name="Nature">
        <title>A ubiquitin-dependent signalling axis specific for ALKBH-mediated DNA dealkylation repair.</title>
        <authorList>
            <person name="Brickner J.R."/>
            <person name="Soll J.M."/>
            <person name="Lombardi P.M."/>
            <person name="Vaagboe C.B."/>
            <person name="Mudge M.C."/>
            <person name="Oyeniran C."/>
            <person name="Rabe R."/>
            <person name="Jackson J."/>
            <person name="Sullender M.E."/>
            <person name="Blazosky E."/>
            <person name="Byrum A.K."/>
            <person name="Zhao Y."/>
            <person name="Corbett M.A."/>
            <person name="Gecz J."/>
            <person name="Field M."/>
            <person name="Vindigni A."/>
            <person name="Slupphaug G."/>
            <person name="Wolberger C."/>
            <person name="Mosammaparast N."/>
        </authorList>
    </citation>
    <scope>FUNCTION</scope>
    <scope>SUBCELLULAR LOCATION</scope>
    <scope>IDENTIFICATION IN A COMPLEX WITH ASCC1 AND ASCC3</scope>
    <scope>INTERACTION WITH PRPF8 AND OTHER COMPONENTS OF THE SPLICEOSOME</scope>
    <scope>MUTAGENESIS OF 478-LEU-LEU-479 AND LEU-506</scope>
</reference>
<reference key="13">
    <citation type="journal article" date="2018" name="J. Biol. Chem.">
        <title>RNA ligase-like domain in activating signal cointegrator 1 complex subunit 1 (ASCC1) regulates ASCC complex function during alkylation damage.</title>
        <authorList>
            <person name="Soll J.M."/>
            <person name="Brickner J.R."/>
            <person name="Mudge M.C."/>
            <person name="Mosammaparast N."/>
        </authorList>
    </citation>
    <scope>INTERACTION WITH ASCC3</scope>
    <scope>IDENTIFICATION IN THE ASCC COMPLEX</scope>
    <scope>SUBCELLULAR LOCATION</scope>
</reference>
<reference key="14">
    <citation type="journal article" date="2020" name="Nucleic Acids Res.">
        <title>The human methyltransferase ZCCHC4 catalyses N6-methyladenosine modification of 28S ribosomal RNA.</title>
        <authorList>
            <person name="Pinto R."/>
            <person name="Vaagboe C.B."/>
            <person name="Jakobsson M.E."/>
            <person name="Kim Y."/>
            <person name="Baltissen M.P."/>
            <person name="O'Donohue M.F."/>
            <person name="Guzman U.H."/>
            <person name="Malecki J.M."/>
            <person name="Wu J."/>
            <person name="Kirpekar F."/>
            <person name="Olsen J.V."/>
            <person name="Gleizes P.E."/>
            <person name="Vermeulen M."/>
            <person name="Leidel S.A."/>
            <person name="Slupphaug G."/>
            <person name="Falnes P.O."/>
        </authorList>
    </citation>
    <scope>INTERACTION WITH ZCCHC4</scope>
</reference>
<reference key="15">
    <citation type="journal article" date="2020" name="Mol. Cell">
        <title>The ASC-1 complex disassembles collided ribosomes.</title>
        <authorList>
            <person name="Juszkiewicz S."/>
            <person name="Speldewinde S.H."/>
            <person name="Wan L."/>
            <person name="Svejstrup J.Q."/>
            <person name="Hegde R.S."/>
        </authorList>
    </citation>
    <scope>FUNCTION</scope>
    <scope>IDENTIFICATION IN THE RQT COMPLEX</scope>
</reference>
<reference key="16">
    <citation type="journal article" date="2020" name="Sci. Rep.">
        <title>Identification of a novel trigger complex that facilitates ribosome-associated quality control in mammalian cells.</title>
        <authorList>
            <person name="Hashimoto S."/>
            <person name="Sugiyama T."/>
            <person name="Yamazaki R."/>
            <person name="Nobuta R."/>
            <person name="Inada T."/>
        </authorList>
    </citation>
    <scope>FUNCTION</scope>
    <scope>IDENTIFICATION IN THE RQT COMPLEX</scope>
    <scope>INTERACTION WITH ASCC3</scope>
    <scope>MUTAGENESIS OF 479-LEU--LEU-491</scope>
</reference>
<reference key="17">
    <citation type="journal article" date="2022" name="Nat. Commun.">
        <title>A distinct mammalian disome collision interface harbors K63-linked polyubiquitination of uS10 to trigger hRQT-mediated subunit dissociation.</title>
        <authorList>
            <person name="Narita M."/>
            <person name="Denk T."/>
            <person name="Matsuo Y."/>
            <person name="Sugiyama T."/>
            <person name="Kikuguchi C."/>
            <person name="Ito S."/>
            <person name="Sato N."/>
            <person name="Suzuki T."/>
            <person name="Hashimoto S."/>
            <person name="Machova I."/>
            <person name="Tesina P."/>
            <person name="Beckmann R."/>
            <person name="Inada T."/>
        </authorList>
    </citation>
    <scope>FUNCTION</scope>
    <scope>IDENTIFICATION IN THE RQT COMPLEX</scope>
    <scope>DOMAIN</scope>
</reference>
<reference key="18">
    <citation type="submission" date="2006-09" db="PDB data bank">
        <title>Solution structure of the CUE domain in the human activating signal cointegrator 1 complex subunit 2 (ASCC2).</title>
        <authorList>
            <consortium name="RIKEN structural genomics initiative (RSGI)"/>
        </authorList>
    </citation>
    <scope>STRUCTURE BY NMR OF 463-525</scope>
</reference>
<keyword id="KW-0002">3D-structure</keyword>
<keyword id="KW-0025">Alternative splicing</keyword>
<keyword id="KW-0903">Direct protein sequencing</keyword>
<keyword id="KW-0227">DNA damage</keyword>
<keyword id="KW-0234">DNA repair</keyword>
<keyword id="KW-0539">Nucleus</keyword>
<keyword id="KW-0597">Phosphoprotein</keyword>
<keyword id="KW-1267">Proteomics identification</keyword>
<keyword id="KW-1185">Reference proteome</keyword>
<keyword id="KW-0804">Transcription</keyword>
<keyword id="KW-0805">Transcription regulation</keyword>
<gene>
    <name type="primary">ASCC2</name>
    <name type="synonym">ASC1P100</name>
    <name evidence="14" type="synonym">RQT3</name>
</gene>
<evidence type="ECO:0000255" key="1">
    <source>
        <dbReference type="PROSITE-ProRule" id="PRU00468"/>
    </source>
</evidence>
<evidence type="ECO:0000256" key="2">
    <source>
        <dbReference type="SAM" id="MobiDB-lite"/>
    </source>
</evidence>
<evidence type="ECO:0000269" key="3">
    <source>
    </source>
</evidence>
<evidence type="ECO:0000269" key="4">
    <source>
    </source>
</evidence>
<evidence type="ECO:0000269" key="5">
    <source>
    </source>
</evidence>
<evidence type="ECO:0000269" key="6">
    <source>
    </source>
</evidence>
<evidence type="ECO:0000269" key="7">
    <source>
    </source>
</evidence>
<evidence type="ECO:0000269" key="8">
    <source>
    </source>
</evidence>
<evidence type="ECO:0000269" key="9">
    <source>
    </source>
</evidence>
<evidence type="ECO:0000269" key="10">
    <source>
    </source>
</evidence>
<evidence type="ECO:0000269" key="11">
    <source>
    </source>
</evidence>
<evidence type="ECO:0000303" key="12">
    <source>
    </source>
</evidence>
<evidence type="ECO:0000303" key="13">
    <source>
    </source>
</evidence>
<evidence type="ECO:0000303" key="14">
    <source>
    </source>
</evidence>
<evidence type="ECO:0000305" key="15"/>
<evidence type="ECO:0000305" key="16">
    <source>
    </source>
</evidence>
<evidence type="ECO:0007744" key="17">
    <source>
    </source>
</evidence>
<evidence type="ECO:0007744" key="18">
    <source>
    </source>
</evidence>
<evidence type="ECO:0007744" key="19">
    <source>
    </source>
</evidence>
<evidence type="ECO:0007744" key="20">
    <source>
    </source>
</evidence>
<evidence type="ECO:0007829" key="21">
    <source>
        <dbReference type="PDB" id="2DI0"/>
    </source>
</evidence>
<evidence type="ECO:0007829" key="22">
    <source>
        <dbReference type="PDB" id="6YXQ"/>
    </source>
</evidence>
<name>ASCC2_HUMAN</name>
<protein>
    <recommendedName>
        <fullName>Activating signal cointegrator 1 complex subunit 2</fullName>
    </recommendedName>
    <alternativeName>
        <fullName evidence="12">ASC-1 complex subunit p100</fullName>
    </alternativeName>
    <alternativeName>
        <fullName evidence="12">Trip4 complex subunit p100</fullName>
    </alternativeName>
</protein>
<organism>
    <name type="scientific">Homo sapiens</name>
    <name type="common">Human</name>
    <dbReference type="NCBI Taxonomy" id="9606"/>
    <lineage>
        <taxon>Eukaryota</taxon>
        <taxon>Metazoa</taxon>
        <taxon>Chordata</taxon>
        <taxon>Craniata</taxon>
        <taxon>Vertebrata</taxon>
        <taxon>Euteleostomi</taxon>
        <taxon>Mammalia</taxon>
        <taxon>Eutheria</taxon>
        <taxon>Euarchontoglires</taxon>
        <taxon>Primates</taxon>
        <taxon>Haplorrhini</taxon>
        <taxon>Catarrhini</taxon>
        <taxon>Hominidae</taxon>
        <taxon>Homo</taxon>
    </lineage>
</organism>
<sequence length="757" mass="86360">MPALPLDQLQITHKDPKTGKLRTSPALHPEQKADRYFVLYKPPPKDNIPALVEEYLERATFVANDLDWLLALPHDKFWCQVIFDETLQKCLDSYLRYVPRKFDEGVASAPEVVDMQKRLHRSVFLTFLRMSTHKESKDHFISPSAFGEILYNNFLFDIPKILDLCVLFGKGNSPLLQKMIGNIFTQQPSYYSDLDETLPTILQVFSNILQHCGLQGDGANTTPQKLEERGRLTPSDMPLLELKDIVLYLCDTCTTLWAFLDIFPLACQTFQKHDFCYRLASFYEAAIPEMESAIKKRRLEDSKLLGDLWQRLSHSRKKLMEIFHIILNQICLLPILESSCDNIQGFIEEFLQIFSSLLQEKRFLRDYDALFPVAEDISLLQQASSVLDETRTAYILQAVESAWEGVDRRKATDAKDPSVIEEPNGEPNGVTVTAEAVSQASSHPENSEEEECMGAAAAVGPAMCGVELDSLISQVKDLLPDLGEGFILACLEYYHYDPEQVINNILEERLAPTLSQLDRNLDREMKPDPTPLLTSRHNVFQNDEFDVFSRDSVDLSRVHKGKSTRKEENTRSLLNDKRAVAAQRQRYEQYSVVVEEVPLQPGESLPYHSVYYEDEYDDTYDGNQVGANDADSDDELISRRPFTIPQVLRTKVPREGQEEDDDDEEDDADEEAPKPDHFVQDPAVLREKAEARRMAFLAKKGYRHDSSTAVAGSPRGHGQSRETTQERRKKEANKATRANHNRRTMADRKRSKGMIPS</sequence>